<reference key="1">
    <citation type="journal article" date="2006" name="Mol. Microbiol.">
        <title>Role of pathogenicity island-associated integrases in the genome plasticity of uropathogenic Escherichia coli strain 536.</title>
        <authorList>
            <person name="Hochhut B."/>
            <person name="Wilde C."/>
            <person name="Balling G."/>
            <person name="Middendorf B."/>
            <person name="Dobrindt U."/>
            <person name="Brzuszkiewicz E."/>
            <person name="Gottschalk G."/>
            <person name="Carniel E."/>
            <person name="Hacker J."/>
        </authorList>
    </citation>
    <scope>NUCLEOTIDE SEQUENCE [LARGE SCALE GENOMIC DNA]</scope>
    <source>
        <strain>536 / UPEC</strain>
    </source>
</reference>
<dbReference type="EC" id="3.6.1.-" evidence="1"/>
<dbReference type="EMBL" id="CP000247">
    <property type="protein sequence ID" value="ABG70468.1"/>
    <property type="molecule type" value="Genomic_DNA"/>
</dbReference>
<dbReference type="RefSeq" id="WP_001296284.1">
    <property type="nucleotide sequence ID" value="NC_008253.1"/>
</dbReference>
<dbReference type="SMR" id="Q0TF11"/>
<dbReference type="KEGG" id="ecp:ECP_2479"/>
<dbReference type="HOGENOM" id="CLU_062658_6_0_6"/>
<dbReference type="Proteomes" id="UP000009182">
    <property type="component" value="Chromosome"/>
</dbReference>
<dbReference type="GO" id="GO:0005829">
    <property type="term" value="C:cytosol"/>
    <property type="evidence" value="ECO:0007669"/>
    <property type="project" value="TreeGrafter"/>
</dbReference>
<dbReference type="GO" id="GO:0016818">
    <property type="term" value="F:hydrolase activity, acting on acid anhydrides, in phosphorus-containing anhydrides"/>
    <property type="evidence" value="ECO:0007669"/>
    <property type="project" value="InterPro"/>
</dbReference>
<dbReference type="GO" id="GO:0046872">
    <property type="term" value="F:metal ion binding"/>
    <property type="evidence" value="ECO:0007669"/>
    <property type="project" value="UniProtKB-KW"/>
</dbReference>
<dbReference type="GO" id="GO:0006753">
    <property type="term" value="P:nucleoside phosphate metabolic process"/>
    <property type="evidence" value="ECO:0007669"/>
    <property type="project" value="TreeGrafter"/>
</dbReference>
<dbReference type="GO" id="GO:0019693">
    <property type="term" value="P:ribose phosphate metabolic process"/>
    <property type="evidence" value="ECO:0007669"/>
    <property type="project" value="TreeGrafter"/>
</dbReference>
<dbReference type="CDD" id="cd24157">
    <property type="entry name" value="NUDIX_GDPMK"/>
    <property type="match status" value="1"/>
</dbReference>
<dbReference type="FunFam" id="3.90.79.10:FF:000010">
    <property type="entry name" value="GDP-mannose pyrophosphatase NudK"/>
    <property type="match status" value="1"/>
</dbReference>
<dbReference type="Gene3D" id="3.90.79.10">
    <property type="entry name" value="Nucleoside Triphosphate Pyrophosphohydrolase"/>
    <property type="match status" value="1"/>
</dbReference>
<dbReference type="InterPro" id="IPR004385">
    <property type="entry name" value="NDP_pyrophosphatase"/>
</dbReference>
<dbReference type="InterPro" id="IPR015797">
    <property type="entry name" value="NUDIX_hydrolase-like_dom_sf"/>
</dbReference>
<dbReference type="InterPro" id="IPR000086">
    <property type="entry name" value="NUDIX_hydrolase_dom"/>
</dbReference>
<dbReference type="NCBIfam" id="TIGR00052">
    <property type="entry name" value="nudix-type nucleoside diphosphatase, YffH/AdpP family"/>
    <property type="match status" value="1"/>
</dbReference>
<dbReference type="NCBIfam" id="NF011585">
    <property type="entry name" value="PRK15009.1"/>
    <property type="match status" value="1"/>
</dbReference>
<dbReference type="PANTHER" id="PTHR11839:SF18">
    <property type="entry name" value="NUDIX HYDROLASE DOMAIN-CONTAINING PROTEIN"/>
    <property type="match status" value="1"/>
</dbReference>
<dbReference type="PANTHER" id="PTHR11839">
    <property type="entry name" value="UDP/ADP-SUGAR PYROPHOSPHATASE"/>
    <property type="match status" value="1"/>
</dbReference>
<dbReference type="Pfam" id="PF00293">
    <property type="entry name" value="NUDIX"/>
    <property type="match status" value="1"/>
</dbReference>
<dbReference type="SUPFAM" id="SSF55811">
    <property type="entry name" value="Nudix"/>
    <property type="match status" value="1"/>
</dbReference>
<dbReference type="PROSITE" id="PS51462">
    <property type="entry name" value="NUDIX"/>
    <property type="match status" value="1"/>
</dbReference>
<accession>Q0TF11</accession>
<name>NUDK_ECOL5</name>
<comment type="function">
    <text evidence="1">Nucleoside diphosphate sugar hydrolase that hydrolyzes GDP-mannose as its preferred substrate, yielding GMP and mannose-1-phosphate.</text>
</comment>
<comment type="catalytic activity">
    <reaction evidence="1">
        <text>GDP-alpha-D-mannose + H2O = alpha-D-mannose 1-phosphate + GMP + 2 H(+)</text>
        <dbReference type="Rhea" id="RHEA:27978"/>
        <dbReference type="ChEBI" id="CHEBI:15377"/>
        <dbReference type="ChEBI" id="CHEBI:15378"/>
        <dbReference type="ChEBI" id="CHEBI:57527"/>
        <dbReference type="ChEBI" id="CHEBI:58115"/>
        <dbReference type="ChEBI" id="CHEBI:58409"/>
    </reaction>
</comment>
<comment type="cofactor">
    <cofactor evidence="1">
        <name>Mg(2+)</name>
        <dbReference type="ChEBI" id="CHEBI:18420"/>
    </cofactor>
</comment>
<comment type="subunit">
    <text evidence="1">Homodimer.</text>
</comment>
<comment type="domain">
    <text evidence="1">In the dimer, the N-terminal domains are swapped between the two monomers, such that residues of both chains contribute to the active site.</text>
</comment>
<comment type="similarity">
    <text evidence="3">Belongs to the Nudix hydrolase family. NudK subfamily.</text>
</comment>
<gene>
    <name type="primary">nudK</name>
    <name type="ordered locus">ECP_2479</name>
</gene>
<feature type="chain" id="PRO_0000342490" description="GDP-mannose pyrophosphatase">
    <location>
        <begin position="1"/>
        <end position="191"/>
    </location>
</feature>
<feature type="domain" description="Nudix hydrolase" evidence="2">
    <location>
        <begin position="43"/>
        <end position="180"/>
    </location>
</feature>
<feature type="short sequence motif" description="Nudix box">
    <location>
        <begin position="86"/>
        <end position="106"/>
    </location>
</feature>
<feature type="binding site" description="in other chain" evidence="1">
    <location>
        <position position="17"/>
    </location>
    <ligand>
        <name>GDP-alpha-D-mannose</name>
        <dbReference type="ChEBI" id="CHEBI:57527"/>
        <note>ligand shared between dimeric partners</note>
    </ligand>
</feature>
<feature type="binding site" evidence="1">
    <location>
        <begin position="38"/>
        <end position="40"/>
    </location>
    <ligand>
        <name>GDP-alpha-D-mannose</name>
        <dbReference type="ChEBI" id="CHEBI:57527"/>
        <note>ligand shared between dimeric partners</note>
    </ligand>
</feature>
<feature type="binding site" description="in other chain" evidence="1">
    <location>
        <position position="67"/>
    </location>
    <ligand>
        <name>GDP-alpha-D-mannose</name>
        <dbReference type="ChEBI" id="CHEBI:57527"/>
        <note>ligand shared between dimeric partners</note>
    </ligand>
</feature>
<feature type="binding site" description="in other chain" evidence="1">
    <location>
        <begin position="85"/>
        <end position="87"/>
    </location>
    <ligand>
        <name>GDP-alpha-D-mannose</name>
        <dbReference type="ChEBI" id="CHEBI:57527"/>
        <note>ligand shared between dimeric partners</note>
    </ligand>
</feature>
<feature type="binding site" evidence="1">
    <location>
        <position position="85"/>
    </location>
    <ligand>
        <name>Mg(2+)</name>
        <dbReference type="ChEBI" id="CHEBI:18420"/>
        <label>1</label>
    </ligand>
</feature>
<feature type="binding site" evidence="1">
    <location>
        <position position="100"/>
    </location>
    <ligand>
        <name>Mg(2+)</name>
        <dbReference type="ChEBI" id="CHEBI:18420"/>
        <label>2</label>
    </ligand>
</feature>
<feature type="binding site" description="in other chain" evidence="1">
    <location>
        <position position="104"/>
    </location>
    <ligand>
        <name>GDP-alpha-D-mannose</name>
        <dbReference type="ChEBI" id="CHEBI:57527"/>
        <note>ligand shared between dimeric partners</note>
    </ligand>
</feature>
<feature type="binding site" evidence="1">
    <location>
        <position position="104"/>
    </location>
    <ligand>
        <name>Mg(2+)</name>
        <dbReference type="ChEBI" id="CHEBI:18420"/>
        <label>1</label>
    </ligand>
</feature>
<feature type="binding site" evidence="1">
    <location>
        <position position="104"/>
    </location>
    <ligand>
        <name>Mg(2+)</name>
        <dbReference type="ChEBI" id="CHEBI:18420"/>
        <label>2</label>
    </ligand>
</feature>
<feature type="binding site" description="in other chain" evidence="1">
    <location>
        <position position="127"/>
    </location>
    <ligand>
        <name>GDP-alpha-D-mannose</name>
        <dbReference type="ChEBI" id="CHEBI:57527"/>
        <note>ligand shared between dimeric partners</note>
    </ligand>
</feature>
<feature type="binding site" description="in other chain" evidence="1">
    <location>
        <begin position="150"/>
        <end position="151"/>
    </location>
    <ligand>
        <name>GDP-alpha-D-mannose</name>
        <dbReference type="ChEBI" id="CHEBI:57527"/>
        <note>ligand shared between dimeric partners</note>
    </ligand>
</feature>
<feature type="binding site" evidence="1">
    <location>
        <position position="151"/>
    </location>
    <ligand>
        <name>Mg(2+)</name>
        <dbReference type="ChEBI" id="CHEBI:18420"/>
        <label>2</label>
    </ligand>
</feature>
<feature type="binding site" description="in other chain" evidence="1">
    <location>
        <position position="176"/>
    </location>
    <ligand>
        <name>GDP-alpha-D-mannose</name>
        <dbReference type="ChEBI" id="CHEBI:57527"/>
        <note>ligand shared between dimeric partners</note>
    </ligand>
</feature>
<sequence>MTQQITLVKDKILSDNYFTLHNITYDLTRKDGEVIRHKREVYDRGNGATILLYNAKKKTVVLIRQFRVATWVNGNESGQLIETCAGLLDNDEPEVCIRKEAIEETGYEVGEVRKLFELYMSPGGVTELIHFFIAEYSDSQRANAGGGVEDEDIEVLELPFSQALEMIKTGEIRDGKTVLLLNYLQMSHLMD</sequence>
<keyword id="KW-0378">Hydrolase</keyword>
<keyword id="KW-0460">Magnesium</keyword>
<keyword id="KW-0479">Metal-binding</keyword>
<organism>
    <name type="scientific">Escherichia coli O6:K15:H31 (strain 536 / UPEC)</name>
    <dbReference type="NCBI Taxonomy" id="362663"/>
    <lineage>
        <taxon>Bacteria</taxon>
        <taxon>Pseudomonadati</taxon>
        <taxon>Pseudomonadota</taxon>
        <taxon>Gammaproteobacteria</taxon>
        <taxon>Enterobacterales</taxon>
        <taxon>Enterobacteriaceae</taxon>
        <taxon>Escherichia</taxon>
    </lineage>
</organism>
<evidence type="ECO:0000250" key="1">
    <source>
        <dbReference type="UniProtKB" id="P37128"/>
    </source>
</evidence>
<evidence type="ECO:0000255" key="2">
    <source>
        <dbReference type="PROSITE-ProRule" id="PRU00794"/>
    </source>
</evidence>
<evidence type="ECO:0000305" key="3"/>
<proteinExistence type="inferred from homology"/>
<protein>
    <recommendedName>
        <fullName>GDP-mannose pyrophosphatase</fullName>
        <ecNumber evidence="1">3.6.1.-</ecNumber>
    </recommendedName>
    <alternativeName>
        <fullName>GDP-mannose hydrolase</fullName>
    </alternativeName>
    <alternativeName>
        <fullName>GDPMK</fullName>
    </alternativeName>
</protein>